<evidence type="ECO:0000250" key="1"/>
<evidence type="ECO:0000250" key="2">
    <source>
        <dbReference type="UniProtKB" id="Q8NC06"/>
    </source>
</evidence>
<evidence type="ECO:0000255" key="3">
    <source>
        <dbReference type="PROSITE-ProRule" id="PRU00573"/>
    </source>
</evidence>
<evidence type="ECO:0000256" key="4">
    <source>
        <dbReference type="SAM" id="MobiDB-lite"/>
    </source>
</evidence>
<comment type="function">
    <text evidence="1">Binds medium- and long-chain acyl-CoA esters and may function as an intracellular carrier of acyl-CoA esters.</text>
</comment>
<keyword id="KW-0446">Lipid-binding</keyword>
<keyword id="KW-0597">Phosphoprotein</keyword>
<keyword id="KW-1185">Reference proteome</keyword>
<dbReference type="EMBL" id="BC076387">
    <property type="protein sequence ID" value="AAH76387.1"/>
    <property type="molecule type" value="mRNA"/>
</dbReference>
<dbReference type="RefSeq" id="NP_001012013.1">
    <property type="nucleotide sequence ID" value="NM_001012013.1"/>
</dbReference>
<dbReference type="RefSeq" id="XP_006247572.1">
    <property type="nucleotide sequence ID" value="XM_006247510.5"/>
</dbReference>
<dbReference type="RefSeq" id="XP_063125236.1">
    <property type="nucleotide sequence ID" value="XM_063269166.1"/>
</dbReference>
<dbReference type="SMR" id="Q6DGF9"/>
<dbReference type="FunCoup" id="Q6DGF9">
    <property type="interactions" value="31"/>
</dbReference>
<dbReference type="STRING" id="10116.ENSRNOP00000004163"/>
<dbReference type="iPTMnet" id="Q6DGF9"/>
<dbReference type="PhosphoSitePlus" id="Q6DGF9"/>
<dbReference type="PaxDb" id="10116-ENSRNOP00000004163"/>
<dbReference type="GeneID" id="303577"/>
<dbReference type="KEGG" id="rno:303577"/>
<dbReference type="UCSC" id="RGD:1308404">
    <property type="organism name" value="rat"/>
</dbReference>
<dbReference type="AGR" id="RGD:1308404"/>
<dbReference type="CTD" id="79777"/>
<dbReference type="RGD" id="1308404">
    <property type="gene designation" value="Acbd4"/>
</dbReference>
<dbReference type="VEuPathDB" id="HostDB:ENSRNOG00000003108"/>
<dbReference type="eggNOG" id="KOG0817">
    <property type="taxonomic scope" value="Eukaryota"/>
</dbReference>
<dbReference type="HOGENOM" id="CLU_034436_1_0_1"/>
<dbReference type="InParanoid" id="Q6DGF9"/>
<dbReference type="OrthoDB" id="71307at2759"/>
<dbReference type="PhylomeDB" id="Q6DGF9"/>
<dbReference type="TreeFam" id="TF319446"/>
<dbReference type="Reactome" id="R-RNO-390918">
    <property type="pathway name" value="Peroxisomal lipid metabolism"/>
</dbReference>
<dbReference type="PRO" id="PR:Q6DGF9"/>
<dbReference type="Proteomes" id="UP000002494">
    <property type="component" value="Chromosome 10"/>
</dbReference>
<dbReference type="Bgee" id="ENSRNOG00000003108">
    <property type="expression patterns" value="Expressed in kidney and 20 other cell types or tissues"/>
</dbReference>
<dbReference type="GO" id="GO:0005737">
    <property type="term" value="C:cytoplasm"/>
    <property type="evidence" value="ECO:0000318"/>
    <property type="project" value="GO_Central"/>
</dbReference>
<dbReference type="GO" id="GO:0000062">
    <property type="term" value="F:fatty-acyl-CoA binding"/>
    <property type="evidence" value="ECO:0000318"/>
    <property type="project" value="GO_Central"/>
</dbReference>
<dbReference type="GO" id="GO:0006631">
    <property type="term" value="P:fatty acid metabolic process"/>
    <property type="evidence" value="ECO:0000318"/>
    <property type="project" value="GO_Central"/>
</dbReference>
<dbReference type="CDD" id="cd00435">
    <property type="entry name" value="ACBP"/>
    <property type="match status" value="1"/>
</dbReference>
<dbReference type="FunFam" id="1.20.80.10:FF:000010">
    <property type="entry name" value="Acyl-CoA-binding domain-containing protein 5"/>
    <property type="match status" value="1"/>
</dbReference>
<dbReference type="Gene3D" id="1.20.80.10">
    <property type="match status" value="1"/>
</dbReference>
<dbReference type="InterPro" id="IPR022408">
    <property type="entry name" value="Acyl-CoA-binding_prot_CS"/>
</dbReference>
<dbReference type="InterPro" id="IPR000582">
    <property type="entry name" value="Acyl-CoA-binding_protein"/>
</dbReference>
<dbReference type="InterPro" id="IPR035984">
    <property type="entry name" value="Acyl-CoA-binding_sf"/>
</dbReference>
<dbReference type="InterPro" id="IPR014352">
    <property type="entry name" value="FERM/acyl-CoA-bd_prot_sf"/>
</dbReference>
<dbReference type="PANTHER" id="PTHR23310:SF53">
    <property type="entry name" value="ACYL-COA-BINDING DOMAIN-CONTAINING PROTEIN 4"/>
    <property type="match status" value="1"/>
</dbReference>
<dbReference type="PANTHER" id="PTHR23310">
    <property type="entry name" value="ACYL-COA-BINDING PROTEIN, ACBP"/>
    <property type="match status" value="1"/>
</dbReference>
<dbReference type="Pfam" id="PF00887">
    <property type="entry name" value="ACBP"/>
    <property type="match status" value="1"/>
</dbReference>
<dbReference type="PRINTS" id="PR00689">
    <property type="entry name" value="ACOABINDINGP"/>
</dbReference>
<dbReference type="SUPFAM" id="SSF47027">
    <property type="entry name" value="Acyl-CoA binding protein"/>
    <property type="match status" value="1"/>
</dbReference>
<dbReference type="PROSITE" id="PS00880">
    <property type="entry name" value="ACB_1"/>
    <property type="match status" value="1"/>
</dbReference>
<dbReference type="PROSITE" id="PS51228">
    <property type="entry name" value="ACB_2"/>
    <property type="match status" value="1"/>
</dbReference>
<reference key="1">
    <citation type="journal article" date="2004" name="Genome Res.">
        <title>The status, quality, and expansion of the NIH full-length cDNA project: the Mammalian Gene Collection (MGC).</title>
        <authorList>
            <consortium name="The MGC Project Team"/>
        </authorList>
    </citation>
    <scope>NUCLEOTIDE SEQUENCE [LARGE SCALE MRNA]</scope>
    <source>
        <tissue>Kidney</tissue>
    </source>
</reference>
<reference key="2">
    <citation type="journal article" date="2012" name="Nat. Commun.">
        <title>Quantitative maps of protein phosphorylation sites across 14 different rat organs and tissues.</title>
        <authorList>
            <person name="Lundby A."/>
            <person name="Secher A."/>
            <person name="Lage K."/>
            <person name="Nordsborg N.B."/>
            <person name="Dmytriyev A."/>
            <person name="Lundby C."/>
            <person name="Olsen J.V."/>
        </authorList>
    </citation>
    <scope>IDENTIFICATION BY MASS SPECTROMETRY [LARGE SCALE ANALYSIS]</scope>
</reference>
<protein>
    <recommendedName>
        <fullName>Acyl-CoA-binding domain-containing protein 4</fullName>
    </recommendedName>
</protein>
<gene>
    <name type="primary">Acbd4</name>
</gene>
<name>ACBD4_RAT</name>
<sequence>MGTEKEEPDCQKQFQAAVSVIQNLPKNGSYRPSYEEMLRFYSYYKQATAGPCLVPRPGFWDPIGRYKWDAWNSLGKMSREEAMSAYITEMKLVAQKVIDTVPLGEVAEDMFGYFEPLYQVIPDMPRPPETFLRRVTGWQEPAVNRDVQAAPEPSHPPKEPAPPSPESRLPRDLDLEVFCDSVEQLEPELVRVPVLSPVPAESELPHLHTGTGDSAQRVWAEQKEAAGRELTTRSSPESPEGFGGSLMGPQELDRWLVGTVQAMQESMKDVHRRLQILESKPQPLEQQRSPRTRPWPLGLSTPTLLFFILWPFVVQWLFRQFRTQRR</sequence>
<proteinExistence type="evidence at protein level"/>
<feature type="chain" id="PRO_0000214034" description="Acyl-CoA-binding domain-containing protein 4">
    <location>
        <begin position="1"/>
        <end position="326"/>
    </location>
</feature>
<feature type="domain" description="ACB" evidence="3">
    <location>
        <begin position="10"/>
        <end position="99"/>
    </location>
</feature>
<feature type="region of interest" description="Disordered" evidence="4">
    <location>
        <begin position="147"/>
        <end position="170"/>
    </location>
</feature>
<feature type="region of interest" description="Disordered" evidence="4">
    <location>
        <begin position="223"/>
        <end position="248"/>
    </location>
</feature>
<feature type="binding site" evidence="1">
    <location>
        <begin position="21"/>
        <end position="30"/>
    </location>
    <ligand>
        <name>an acyl-CoA</name>
        <dbReference type="ChEBI" id="CHEBI:58342"/>
    </ligand>
</feature>
<feature type="binding site" evidence="1">
    <location>
        <begin position="41"/>
        <end position="45"/>
    </location>
    <ligand>
        <name>an acyl-CoA</name>
        <dbReference type="ChEBI" id="CHEBI:58342"/>
    </ligand>
</feature>
<feature type="binding site" evidence="1">
    <location>
        <position position="67"/>
    </location>
    <ligand>
        <name>an acyl-CoA</name>
        <dbReference type="ChEBI" id="CHEBI:58342"/>
    </ligand>
</feature>
<feature type="binding site" evidence="1">
    <location>
        <position position="86"/>
    </location>
    <ligand>
        <name>an acyl-CoA</name>
        <dbReference type="ChEBI" id="CHEBI:58342"/>
    </ligand>
</feature>
<feature type="modified residue" description="Phosphoserine" evidence="2">
    <location>
        <position position="164"/>
    </location>
</feature>
<organism>
    <name type="scientific">Rattus norvegicus</name>
    <name type="common">Rat</name>
    <dbReference type="NCBI Taxonomy" id="10116"/>
    <lineage>
        <taxon>Eukaryota</taxon>
        <taxon>Metazoa</taxon>
        <taxon>Chordata</taxon>
        <taxon>Craniata</taxon>
        <taxon>Vertebrata</taxon>
        <taxon>Euteleostomi</taxon>
        <taxon>Mammalia</taxon>
        <taxon>Eutheria</taxon>
        <taxon>Euarchontoglires</taxon>
        <taxon>Glires</taxon>
        <taxon>Rodentia</taxon>
        <taxon>Myomorpha</taxon>
        <taxon>Muroidea</taxon>
        <taxon>Muridae</taxon>
        <taxon>Murinae</taxon>
        <taxon>Rattus</taxon>
    </lineage>
</organism>
<accession>Q6DGF9</accession>